<name>RS11_STRS2</name>
<keyword id="KW-0687">Ribonucleoprotein</keyword>
<keyword id="KW-0689">Ribosomal protein</keyword>
<keyword id="KW-0694">RNA-binding</keyword>
<keyword id="KW-0699">rRNA-binding</keyword>
<evidence type="ECO:0000255" key="1">
    <source>
        <dbReference type="HAMAP-Rule" id="MF_01310"/>
    </source>
</evidence>
<evidence type="ECO:0000305" key="2"/>
<reference key="1">
    <citation type="journal article" date="2007" name="PLoS ONE">
        <title>A glimpse of streptococcal toxic shock syndrome from comparative genomics of S. suis 2 Chinese isolates.</title>
        <authorList>
            <person name="Chen C."/>
            <person name="Tang J."/>
            <person name="Dong W."/>
            <person name="Wang C."/>
            <person name="Feng Y."/>
            <person name="Wang J."/>
            <person name="Zheng F."/>
            <person name="Pan X."/>
            <person name="Liu D."/>
            <person name="Li M."/>
            <person name="Song Y."/>
            <person name="Zhu X."/>
            <person name="Sun H."/>
            <person name="Feng T."/>
            <person name="Guo Z."/>
            <person name="Ju A."/>
            <person name="Ge J."/>
            <person name="Dong Y."/>
            <person name="Sun W."/>
            <person name="Jiang Y."/>
            <person name="Wang J."/>
            <person name="Yan J."/>
            <person name="Yang H."/>
            <person name="Wang X."/>
            <person name="Gao G.F."/>
            <person name="Yang R."/>
            <person name="Wang J."/>
            <person name="Yu J."/>
        </authorList>
    </citation>
    <scope>NUCLEOTIDE SEQUENCE [LARGE SCALE GENOMIC DNA]</scope>
    <source>
        <strain>98HAH33</strain>
    </source>
</reference>
<organism>
    <name type="scientific">Streptococcus suis (strain 98HAH33)</name>
    <dbReference type="NCBI Taxonomy" id="391296"/>
    <lineage>
        <taxon>Bacteria</taxon>
        <taxon>Bacillati</taxon>
        <taxon>Bacillota</taxon>
        <taxon>Bacilli</taxon>
        <taxon>Lactobacillales</taxon>
        <taxon>Streptococcaceae</taxon>
        <taxon>Streptococcus</taxon>
    </lineage>
</organism>
<protein>
    <recommendedName>
        <fullName evidence="1">Small ribosomal subunit protein uS11</fullName>
    </recommendedName>
    <alternativeName>
        <fullName evidence="2">30S ribosomal protein S11</fullName>
    </alternativeName>
</protein>
<proteinExistence type="inferred from homology"/>
<sequence length="127" mass="13399">MAKPTRKRRVKKNIESGIAHIHATFNNTIVMITDVHGNAIAWSSAGALGFKGSRKSTPFAAQMASEAAAKSAQEHGLKTVEVTVKGPGSGRESAIRALAAAGLEVTAIRDVTPVPHNGARPPKRRRV</sequence>
<comment type="function">
    <text evidence="1">Located on the platform of the 30S subunit, it bridges several disparate RNA helices of the 16S rRNA. Forms part of the Shine-Dalgarno cleft in the 70S ribosome.</text>
</comment>
<comment type="subunit">
    <text evidence="1">Part of the 30S ribosomal subunit. Interacts with proteins S7 and S18. Binds to IF-3.</text>
</comment>
<comment type="similarity">
    <text evidence="1">Belongs to the universal ribosomal protein uS11 family.</text>
</comment>
<gene>
    <name evidence="1" type="primary">rpsK</name>
    <name type="ordered locus">SSU98_0096</name>
</gene>
<feature type="chain" id="PRO_0000294871" description="Small ribosomal subunit protein uS11">
    <location>
        <begin position="1"/>
        <end position="127"/>
    </location>
</feature>
<dbReference type="EMBL" id="CP000408">
    <property type="protein sequence ID" value="ABP91256.1"/>
    <property type="molecule type" value="Genomic_DNA"/>
</dbReference>
<dbReference type="SMR" id="A4VYR7"/>
<dbReference type="KEGG" id="ssv:SSU98_0096"/>
<dbReference type="HOGENOM" id="CLU_072439_5_0_9"/>
<dbReference type="GO" id="GO:1990904">
    <property type="term" value="C:ribonucleoprotein complex"/>
    <property type="evidence" value="ECO:0007669"/>
    <property type="project" value="UniProtKB-KW"/>
</dbReference>
<dbReference type="GO" id="GO:0005840">
    <property type="term" value="C:ribosome"/>
    <property type="evidence" value="ECO:0007669"/>
    <property type="project" value="UniProtKB-KW"/>
</dbReference>
<dbReference type="GO" id="GO:0019843">
    <property type="term" value="F:rRNA binding"/>
    <property type="evidence" value="ECO:0007669"/>
    <property type="project" value="UniProtKB-UniRule"/>
</dbReference>
<dbReference type="GO" id="GO:0003735">
    <property type="term" value="F:structural constituent of ribosome"/>
    <property type="evidence" value="ECO:0007669"/>
    <property type="project" value="InterPro"/>
</dbReference>
<dbReference type="GO" id="GO:0006412">
    <property type="term" value="P:translation"/>
    <property type="evidence" value="ECO:0007669"/>
    <property type="project" value="UniProtKB-UniRule"/>
</dbReference>
<dbReference type="FunFam" id="3.30.420.80:FF:000001">
    <property type="entry name" value="30S ribosomal protein S11"/>
    <property type="match status" value="1"/>
</dbReference>
<dbReference type="Gene3D" id="3.30.420.80">
    <property type="entry name" value="Ribosomal protein S11"/>
    <property type="match status" value="1"/>
</dbReference>
<dbReference type="HAMAP" id="MF_01310">
    <property type="entry name" value="Ribosomal_uS11"/>
    <property type="match status" value="1"/>
</dbReference>
<dbReference type="InterPro" id="IPR001971">
    <property type="entry name" value="Ribosomal_uS11"/>
</dbReference>
<dbReference type="InterPro" id="IPR019981">
    <property type="entry name" value="Ribosomal_uS11_bac-type"/>
</dbReference>
<dbReference type="InterPro" id="IPR018102">
    <property type="entry name" value="Ribosomal_uS11_CS"/>
</dbReference>
<dbReference type="InterPro" id="IPR036967">
    <property type="entry name" value="Ribosomal_uS11_sf"/>
</dbReference>
<dbReference type="NCBIfam" id="NF003698">
    <property type="entry name" value="PRK05309.1"/>
    <property type="match status" value="1"/>
</dbReference>
<dbReference type="NCBIfam" id="TIGR03632">
    <property type="entry name" value="uS11_bact"/>
    <property type="match status" value="1"/>
</dbReference>
<dbReference type="PANTHER" id="PTHR11759">
    <property type="entry name" value="40S RIBOSOMAL PROTEIN S14/30S RIBOSOMAL PROTEIN S11"/>
    <property type="match status" value="1"/>
</dbReference>
<dbReference type="Pfam" id="PF00411">
    <property type="entry name" value="Ribosomal_S11"/>
    <property type="match status" value="1"/>
</dbReference>
<dbReference type="PIRSF" id="PIRSF002131">
    <property type="entry name" value="Ribosomal_S11"/>
    <property type="match status" value="1"/>
</dbReference>
<dbReference type="SUPFAM" id="SSF53137">
    <property type="entry name" value="Translational machinery components"/>
    <property type="match status" value="1"/>
</dbReference>
<dbReference type="PROSITE" id="PS00054">
    <property type="entry name" value="RIBOSOMAL_S11"/>
    <property type="match status" value="1"/>
</dbReference>
<accession>A4VYR7</accession>